<evidence type="ECO:0000255" key="1">
    <source>
        <dbReference type="HAMAP-Rule" id="MF_00688"/>
    </source>
</evidence>
<evidence type="ECO:0000256" key="2">
    <source>
        <dbReference type="SAM" id="MobiDB-lite"/>
    </source>
</evidence>
<reference key="1">
    <citation type="journal article" date="2002" name="Nature">
        <title>Comparison of the genomes of two Xanthomonas pathogens with differing host specificities.</title>
        <authorList>
            <person name="da Silva A.C.R."/>
            <person name="Ferro J.A."/>
            <person name="Reinach F.C."/>
            <person name="Farah C.S."/>
            <person name="Furlan L.R."/>
            <person name="Quaggio R.B."/>
            <person name="Monteiro-Vitorello C.B."/>
            <person name="Van Sluys M.A."/>
            <person name="Almeida N.F. Jr."/>
            <person name="Alves L.M.C."/>
            <person name="do Amaral A.M."/>
            <person name="Bertolini M.C."/>
            <person name="Camargo L.E.A."/>
            <person name="Camarotte G."/>
            <person name="Cannavan F."/>
            <person name="Cardozo J."/>
            <person name="Chambergo F."/>
            <person name="Ciapina L.P."/>
            <person name="Cicarelli R.M.B."/>
            <person name="Coutinho L.L."/>
            <person name="Cursino-Santos J.R."/>
            <person name="El-Dorry H."/>
            <person name="Faria J.B."/>
            <person name="Ferreira A.J.S."/>
            <person name="Ferreira R.C.C."/>
            <person name="Ferro M.I.T."/>
            <person name="Formighieri E.F."/>
            <person name="Franco M.C."/>
            <person name="Greggio C.C."/>
            <person name="Gruber A."/>
            <person name="Katsuyama A.M."/>
            <person name="Kishi L.T."/>
            <person name="Leite R.P."/>
            <person name="Lemos E.G.M."/>
            <person name="Lemos M.V.F."/>
            <person name="Locali E.C."/>
            <person name="Machado M.A."/>
            <person name="Madeira A.M.B.N."/>
            <person name="Martinez-Rossi N.M."/>
            <person name="Martins E.C."/>
            <person name="Meidanis J."/>
            <person name="Menck C.F.M."/>
            <person name="Miyaki C.Y."/>
            <person name="Moon D.H."/>
            <person name="Moreira L.M."/>
            <person name="Novo M.T.M."/>
            <person name="Okura V.K."/>
            <person name="Oliveira M.C."/>
            <person name="Oliveira V.R."/>
            <person name="Pereira H.A."/>
            <person name="Rossi A."/>
            <person name="Sena J.A.D."/>
            <person name="Silva C."/>
            <person name="de Souza R.F."/>
            <person name="Spinola L.A.F."/>
            <person name="Takita M.A."/>
            <person name="Tamura R.E."/>
            <person name="Teixeira E.C."/>
            <person name="Tezza R.I.D."/>
            <person name="Trindade dos Santos M."/>
            <person name="Truffi D."/>
            <person name="Tsai S.M."/>
            <person name="White F.F."/>
            <person name="Setubal J.C."/>
            <person name="Kitajima J.P."/>
        </authorList>
    </citation>
    <scope>NUCLEOTIDE SEQUENCE [LARGE SCALE GENOMIC DNA]</scope>
    <source>
        <strain>ATCC 33913 / DSM 3586 / NCPPB 528 / LMG 568 / P 25</strain>
    </source>
</reference>
<dbReference type="EC" id="2.3.2.6" evidence="1"/>
<dbReference type="EMBL" id="AE008922">
    <property type="protein sequence ID" value="AAM41258.1"/>
    <property type="molecule type" value="Genomic_DNA"/>
</dbReference>
<dbReference type="RefSeq" id="NP_637334.1">
    <property type="nucleotide sequence ID" value="NC_003902.1"/>
</dbReference>
<dbReference type="RefSeq" id="WP_011037133.1">
    <property type="nucleotide sequence ID" value="NC_003902.1"/>
</dbReference>
<dbReference type="SMR" id="Q8P996"/>
<dbReference type="STRING" id="190485.XCC1969"/>
<dbReference type="EnsemblBacteria" id="AAM41258">
    <property type="protein sequence ID" value="AAM41258"/>
    <property type="gene ID" value="XCC1969"/>
</dbReference>
<dbReference type="KEGG" id="xcc:XCC1969"/>
<dbReference type="PATRIC" id="fig|190485.4.peg.2104"/>
<dbReference type="eggNOG" id="COG2360">
    <property type="taxonomic scope" value="Bacteria"/>
</dbReference>
<dbReference type="HOGENOM" id="CLU_075045_0_0_6"/>
<dbReference type="OrthoDB" id="9790282at2"/>
<dbReference type="Proteomes" id="UP000001010">
    <property type="component" value="Chromosome"/>
</dbReference>
<dbReference type="GO" id="GO:0005737">
    <property type="term" value="C:cytoplasm"/>
    <property type="evidence" value="ECO:0000318"/>
    <property type="project" value="GO_Central"/>
</dbReference>
<dbReference type="GO" id="GO:0008914">
    <property type="term" value="F:leucyl-tRNA--protein transferase activity"/>
    <property type="evidence" value="ECO:0000318"/>
    <property type="project" value="GO_Central"/>
</dbReference>
<dbReference type="GO" id="GO:0030163">
    <property type="term" value="P:protein catabolic process"/>
    <property type="evidence" value="ECO:0007669"/>
    <property type="project" value="UniProtKB-UniRule"/>
</dbReference>
<dbReference type="FunFam" id="3.30.70.3550:FF:000001">
    <property type="entry name" value="Leucyl/phenylalanyl-tRNA--protein transferase"/>
    <property type="match status" value="1"/>
</dbReference>
<dbReference type="FunFam" id="3.40.630.70:FF:000008">
    <property type="entry name" value="Leucyl/phenylalanyl-tRNA--protein transferase"/>
    <property type="match status" value="1"/>
</dbReference>
<dbReference type="Gene3D" id="3.40.630.70">
    <property type="entry name" value="Leucyl/phenylalanyl-tRNA-protein transferase, C-terminal domain"/>
    <property type="match status" value="1"/>
</dbReference>
<dbReference type="Gene3D" id="3.30.70.3550">
    <property type="entry name" value="Leucyl/phenylalanyl-tRNA-protein transferase, N-terminal domain"/>
    <property type="match status" value="1"/>
</dbReference>
<dbReference type="HAMAP" id="MF_00688">
    <property type="entry name" value="Leu_Phe_trans"/>
    <property type="match status" value="1"/>
</dbReference>
<dbReference type="InterPro" id="IPR016181">
    <property type="entry name" value="Acyl_CoA_acyltransferase"/>
</dbReference>
<dbReference type="InterPro" id="IPR004616">
    <property type="entry name" value="Leu/Phe-tRNA_Trfase"/>
</dbReference>
<dbReference type="InterPro" id="IPR042203">
    <property type="entry name" value="Leu/Phe-tRNA_Trfase_C"/>
</dbReference>
<dbReference type="InterPro" id="IPR042221">
    <property type="entry name" value="Leu/Phe-tRNA_Trfase_N"/>
</dbReference>
<dbReference type="NCBIfam" id="TIGR00667">
    <property type="entry name" value="aat"/>
    <property type="match status" value="1"/>
</dbReference>
<dbReference type="PANTHER" id="PTHR30098">
    <property type="entry name" value="LEUCYL/PHENYLALANYL-TRNA--PROTEIN TRANSFERASE"/>
    <property type="match status" value="1"/>
</dbReference>
<dbReference type="PANTHER" id="PTHR30098:SF2">
    <property type="entry name" value="LEUCYL_PHENYLALANYL-TRNA--PROTEIN TRANSFERASE"/>
    <property type="match status" value="1"/>
</dbReference>
<dbReference type="Pfam" id="PF03588">
    <property type="entry name" value="Leu_Phe_trans"/>
    <property type="match status" value="1"/>
</dbReference>
<dbReference type="SUPFAM" id="SSF55729">
    <property type="entry name" value="Acyl-CoA N-acyltransferases (Nat)"/>
    <property type="match status" value="1"/>
</dbReference>
<proteinExistence type="inferred from homology"/>
<organism>
    <name type="scientific">Xanthomonas campestris pv. campestris (strain ATCC 33913 / DSM 3586 / NCPPB 528 / LMG 568 / P 25)</name>
    <dbReference type="NCBI Taxonomy" id="190485"/>
    <lineage>
        <taxon>Bacteria</taxon>
        <taxon>Pseudomonadati</taxon>
        <taxon>Pseudomonadota</taxon>
        <taxon>Gammaproteobacteria</taxon>
        <taxon>Lysobacterales</taxon>
        <taxon>Lysobacteraceae</taxon>
        <taxon>Xanthomonas</taxon>
    </lineage>
</organism>
<name>LFTR_XANCP</name>
<comment type="function">
    <text evidence="1">Functions in the N-end rule pathway of protein degradation where it conjugates Leu, Phe and, less efficiently, Met from aminoacyl-tRNAs to the N-termini of proteins containing an N-terminal arginine or lysine.</text>
</comment>
<comment type="catalytic activity">
    <reaction evidence="1">
        <text>N-terminal L-lysyl-[protein] + L-leucyl-tRNA(Leu) = N-terminal L-leucyl-L-lysyl-[protein] + tRNA(Leu) + H(+)</text>
        <dbReference type="Rhea" id="RHEA:12340"/>
        <dbReference type="Rhea" id="RHEA-COMP:9613"/>
        <dbReference type="Rhea" id="RHEA-COMP:9622"/>
        <dbReference type="Rhea" id="RHEA-COMP:12670"/>
        <dbReference type="Rhea" id="RHEA-COMP:12671"/>
        <dbReference type="ChEBI" id="CHEBI:15378"/>
        <dbReference type="ChEBI" id="CHEBI:65249"/>
        <dbReference type="ChEBI" id="CHEBI:78442"/>
        <dbReference type="ChEBI" id="CHEBI:78494"/>
        <dbReference type="ChEBI" id="CHEBI:133043"/>
        <dbReference type="EC" id="2.3.2.6"/>
    </reaction>
</comment>
<comment type="catalytic activity">
    <reaction evidence="1">
        <text>N-terminal L-arginyl-[protein] + L-leucyl-tRNA(Leu) = N-terminal L-leucyl-L-arginyl-[protein] + tRNA(Leu) + H(+)</text>
        <dbReference type="Rhea" id="RHEA:50416"/>
        <dbReference type="Rhea" id="RHEA-COMP:9613"/>
        <dbReference type="Rhea" id="RHEA-COMP:9622"/>
        <dbReference type="Rhea" id="RHEA-COMP:12672"/>
        <dbReference type="Rhea" id="RHEA-COMP:12673"/>
        <dbReference type="ChEBI" id="CHEBI:15378"/>
        <dbReference type="ChEBI" id="CHEBI:64719"/>
        <dbReference type="ChEBI" id="CHEBI:78442"/>
        <dbReference type="ChEBI" id="CHEBI:78494"/>
        <dbReference type="ChEBI" id="CHEBI:133044"/>
        <dbReference type="EC" id="2.3.2.6"/>
    </reaction>
</comment>
<comment type="catalytic activity">
    <reaction evidence="1">
        <text>L-phenylalanyl-tRNA(Phe) + an N-terminal L-alpha-aminoacyl-[protein] = an N-terminal L-phenylalanyl-L-alpha-aminoacyl-[protein] + tRNA(Phe)</text>
        <dbReference type="Rhea" id="RHEA:43632"/>
        <dbReference type="Rhea" id="RHEA-COMP:9668"/>
        <dbReference type="Rhea" id="RHEA-COMP:9699"/>
        <dbReference type="Rhea" id="RHEA-COMP:10636"/>
        <dbReference type="Rhea" id="RHEA-COMP:10637"/>
        <dbReference type="ChEBI" id="CHEBI:78442"/>
        <dbReference type="ChEBI" id="CHEBI:78531"/>
        <dbReference type="ChEBI" id="CHEBI:78597"/>
        <dbReference type="ChEBI" id="CHEBI:83561"/>
        <dbReference type="EC" id="2.3.2.6"/>
    </reaction>
</comment>
<comment type="subcellular location">
    <subcellularLocation>
        <location evidence="1">Cytoplasm</location>
    </subcellularLocation>
</comment>
<comment type="similarity">
    <text evidence="1">Belongs to the L/F-transferase family.</text>
</comment>
<protein>
    <recommendedName>
        <fullName evidence="1">Leucyl/phenylalanyl-tRNA--protein transferase</fullName>
        <ecNumber evidence="1">2.3.2.6</ecNumber>
    </recommendedName>
    <alternativeName>
        <fullName evidence="1">L/F-transferase</fullName>
    </alternativeName>
    <alternativeName>
        <fullName evidence="1">Leucyltransferase</fullName>
    </alternativeName>
    <alternativeName>
        <fullName evidence="1">Phenyalanyltransferase</fullName>
    </alternativeName>
</protein>
<keyword id="KW-0012">Acyltransferase</keyword>
<keyword id="KW-0963">Cytoplasm</keyword>
<keyword id="KW-1185">Reference proteome</keyword>
<keyword id="KW-0808">Transferase</keyword>
<gene>
    <name evidence="1" type="primary">aat</name>
    <name type="ordered locus">XCC1969</name>
</gene>
<sequence>MSRTLPHLLSSDPASPFPPAEHALREPDGLLAIGGDLHPQRLLNAYAHGIFPWFSDGQPLLWWSPNPRTVFRTDAIHLSSRFRRQLRTCTWTLRADTAFAQVIAACALSPRPGQDGTWITDQMQEAYLDLHRRGYAHSVEVFDGARLVGGIYGVAIGQMFFGESMFSGASGGSKIALAALAAELHGLGWPLIDAQVENPHLMRLGAQRLQREQFLQHVATQVALPEPPGSWTQRYGERHASALAGVRLT</sequence>
<accession>Q8P996</accession>
<feature type="chain" id="PRO_0000207251" description="Leucyl/phenylalanyl-tRNA--protein transferase">
    <location>
        <begin position="1"/>
        <end position="249"/>
    </location>
</feature>
<feature type="region of interest" description="Disordered" evidence="2">
    <location>
        <begin position="1"/>
        <end position="21"/>
    </location>
</feature>